<accession>A0A142C7A5</accession>
<reference key="1">
    <citation type="journal article" date="2016" name="J. Am. Chem. Soc.">
        <title>Phenalenone polyketide cyclization catalyzed by fungal polyketide synthase and flavin-dependent monooxygenase.</title>
        <authorList>
            <person name="Gao S.S."/>
            <person name="Duan A."/>
            <person name="Xu W."/>
            <person name="Yu P."/>
            <person name="Hang L."/>
            <person name="Houk K.N."/>
            <person name="Tang Y."/>
        </authorList>
    </citation>
    <scope>NUCLEOTIDE SEQUENCE [GENOMIC DNA]</scope>
    <scope>FUNCTION</scope>
    <source>
        <strain>ATCC 10118 / CBS 336.48 / NBRC 31747 / NRRL 1040</strain>
    </source>
</reference>
<reference key="2">
    <citation type="journal article" date="2017" name="J. Am. Chem. Soc.">
        <title>Enzyme-catalyzed intramolecular enantioselective hydroalkoxylation.</title>
        <authorList>
            <person name="Gao S.S."/>
            <person name="Garcia-Borras M."/>
            <person name="Barber J.S."/>
            <person name="Hai Y."/>
            <person name="Duan A."/>
            <person name="Garg N.K."/>
            <person name="Houk K.N."/>
            <person name="Tang Y."/>
        </authorList>
    </citation>
    <scope>FUNCTION</scope>
    <scope>CATALYTIC ACTIVITY</scope>
    <scope>PATHWAY</scope>
</reference>
<keyword id="KW-0274">FAD</keyword>
<keyword id="KW-0285">Flavoprotein</keyword>
<keyword id="KW-0560">Oxidoreductase</keyword>
<evidence type="ECO:0000250" key="1">
    <source>
        <dbReference type="UniProtKB" id="Q9BRQ8"/>
    </source>
</evidence>
<evidence type="ECO:0000255" key="2"/>
<evidence type="ECO:0000269" key="3">
    <source>
    </source>
</evidence>
<evidence type="ECO:0000269" key="4">
    <source>
    </source>
</evidence>
<evidence type="ECO:0000303" key="5">
    <source>
    </source>
</evidence>
<evidence type="ECO:0000305" key="6"/>
<evidence type="ECO:0000305" key="7">
    <source>
    </source>
</evidence>
<name>PHNG_PENHR</name>
<organism>
    <name type="scientific">Penicillium herquei</name>
    <dbReference type="NCBI Taxonomy" id="69774"/>
    <lineage>
        <taxon>Eukaryota</taxon>
        <taxon>Fungi</taxon>
        <taxon>Dikarya</taxon>
        <taxon>Ascomycota</taxon>
        <taxon>Pezizomycotina</taxon>
        <taxon>Eurotiomycetes</taxon>
        <taxon>Eurotiomycetidae</taxon>
        <taxon>Eurotiales</taxon>
        <taxon>Aspergillaceae</taxon>
        <taxon>Penicillium</taxon>
    </lineage>
</organism>
<sequence length="417" mass="45024">MAAETATSKQNLVILGGSYAGLSTAHYLLRHVVPQLPGKESYQVILISASSEAMCRPACPRALISDDMFQQDKLFVSIPAQFEQYLKDTFKFIHGTVTSLDHQDRCVTVSVKDGDPEKIKCHAIVIATGASTASPLLGLNRDSETLRTNWNEFRAALPTAKHIVIAGGGPAGVETAGELGEYLNGRAGWFHSKLENPKVEITLVTADSKILPILRPALATKAEKLLNKVGVTVIKKSRVTNVTPPGAGAEDALTANATVTLEDGKELQADLYIPATGMTYNSSFVDASLLTDYGRVETDPGTLRVVNGGALLYAIGDVGSHARPAVHNILNTVPILCANMKRDLLLAVQPDASVGEDRQFKEDTRETQLVPVGRSKGVGAFMGFRQPGFMVWLIKGRDYWLWTTEGLWSGKHWAKGS</sequence>
<dbReference type="EC" id="1.-.-.-" evidence="7"/>
<dbReference type="EMBL" id="KU641632">
    <property type="protein sequence ID" value="AMP46757.1"/>
    <property type="molecule type" value="Genomic_DNA"/>
</dbReference>
<dbReference type="SMR" id="A0A142C7A5"/>
<dbReference type="GO" id="GO:0005737">
    <property type="term" value="C:cytoplasm"/>
    <property type="evidence" value="ECO:0007669"/>
    <property type="project" value="TreeGrafter"/>
</dbReference>
<dbReference type="GO" id="GO:0004174">
    <property type="term" value="F:electron-transferring-flavoprotein dehydrogenase activity"/>
    <property type="evidence" value="ECO:0007669"/>
    <property type="project" value="TreeGrafter"/>
</dbReference>
<dbReference type="GO" id="GO:0050660">
    <property type="term" value="F:flavin adenine dinucleotide binding"/>
    <property type="evidence" value="ECO:0007669"/>
    <property type="project" value="TreeGrafter"/>
</dbReference>
<dbReference type="Gene3D" id="3.50.50.100">
    <property type="match status" value="1"/>
</dbReference>
<dbReference type="InterPro" id="IPR036188">
    <property type="entry name" value="FAD/NAD-bd_sf"/>
</dbReference>
<dbReference type="InterPro" id="IPR023753">
    <property type="entry name" value="FAD/NAD-binding_dom"/>
</dbReference>
<dbReference type="PANTHER" id="PTHR43735">
    <property type="entry name" value="APOPTOSIS-INDUCING FACTOR 1"/>
    <property type="match status" value="1"/>
</dbReference>
<dbReference type="PANTHER" id="PTHR43735:SF3">
    <property type="entry name" value="FERROPTOSIS SUPPRESSOR PROTEIN 1"/>
    <property type="match status" value="1"/>
</dbReference>
<dbReference type="Pfam" id="PF07992">
    <property type="entry name" value="Pyr_redox_2"/>
    <property type="match status" value="1"/>
</dbReference>
<dbReference type="PRINTS" id="PR00368">
    <property type="entry name" value="FADPNR"/>
</dbReference>
<dbReference type="PRINTS" id="PR00469">
    <property type="entry name" value="PNDRDTASEII"/>
</dbReference>
<dbReference type="SUPFAM" id="SSF51905">
    <property type="entry name" value="FAD/NAD(P)-binding domain"/>
    <property type="match status" value="1"/>
</dbReference>
<feature type="chain" id="PRO_0000446167" description="Oxidoreductase phnG">
    <location>
        <begin position="1"/>
        <end position="417"/>
    </location>
</feature>
<feature type="binding site" evidence="2">
    <location>
        <begin position="16"/>
        <end position="20"/>
    </location>
    <ligand>
        <name>6-hydroxy-FAD</name>
        <dbReference type="ChEBI" id="CHEBI:60470"/>
    </ligand>
</feature>
<feature type="binding site" evidence="2">
    <location>
        <position position="61"/>
    </location>
    <ligand>
        <name>6-hydroxy-FAD</name>
        <dbReference type="ChEBI" id="CHEBI:60470"/>
    </ligand>
</feature>
<feature type="binding site" evidence="2">
    <location>
        <position position="317"/>
    </location>
    <ligand>
        <name>6-hydroxy-FAD</name>
        <dbReference type="ChEBI" id="CHEBI:60470"/>
    </ligand>
</feature>
<gene>
    <name evidence="5" type="primary">phnG</name>
</gene>
<comment type="function">
    <text evidence="3 4">Oxidoreductase; part of the gene cluster that mediates the biosynthesis of phenalenones such as herqueinone, compounds that have been reported to treat tumors, bacterial infections and/or mycoses, and rheumatic diseases (PubMed:26978228). The non-reducing polyketide synthase phnA synthesizes the heptaketide backbone and cyclizes it into the angular, hemiketal-containing naphtho-gamma-pyrone prephenalenone. The product template (PT) domain of phnA catalyzes only the C4-C9 aldol condensation, which is unprecedented among known PT domains (PubMed:26978228, PubMed:28240554). The transformation of prephenalenone to phenalenones requires an FAD-dependent monooxygenase phnB, which catalyzes the C2 aromatic hydroxylation of prephenalenone and ring opening of the gamma-pyrone ring simultaneously (PubMed:26978228, PubMed:28240554). Subsequent intramolecular deprotonation of C3 phenolic oxygen accelerates phenalenone ring closure to yield the tricyclic phenalenone core with a C2 hydroxylation (PubMed:26978228, PubMed:28240554). The prenyltransferase phnF further catalyzes reverse C-prenylation of phenalenone by direct electrophilic substitution at C6, or possibly via first a forward O-prenylation of a neighboring phenol in phenalenone, followed by a Claisen rearrangement (PubMed:28240554). The hydroalkoxylation enzyme phnH catalyzes the 5-exo-trig cyclization via acid catalysis after the spontaneous deprotonation of 7-OH, which leads to the formation of the dihydrobenzofuran atrovenetin (PubMed:28240554). Atrovenetin is further converted to deoxyherqueinone by the O-methyltransferase phnC which can methylate C2-OH to stabilize the northern portion of the phenalenone core (PubMed:28240554). Finally, the oxidoreductase phnG converts deoxyherqueinone to herqueinone via C6 hydroxylation (PubMed:28240554).</text>
</comment>
<comment type="catalytic activity">
    <reaction evidence="4">
        <text>deoxyherqueinone + NADPH + O2 + H(+) = herqueinone + NADP(+) + H2O</text>
        <dbReference type="Rhea" id="RHEA:62668"/>
        <dbReference type="ChEBI" id="CHEBI:15377"/>
        <dbReference type="ChEBI" id="CHEBI:15378"/>
        <dbReference type="ChEBI" id="CHEBI:15379"/>
        <dbReference type="ChEBI" id="CHEBI:57783"/>
        <dbReference type="ChEBI" id="CHEBI:58349"/>
        <dbReference type="ChEBI" id="CHEBI:145874"/>
        <dbReference type="ChEBI" id="CHEBI:145876"/>
    </reaction>
    <physiologicalReaction direction="left-to-right" evidence="4">
        <dbReference type="Rhea" id="RHEA:62669"/>
    </physiologicalReaction>
</comment>
<comment type="cofactor">
    <cofactor evidence="1">
        <name>6-hydroxy-FAD</name>
        <dbReference type="ChEBI" id="CHEBI:60470"/>
    </cofactor>
    <text evidence="1">Binds 6-hydroxy-FAD non-covalently.</text>
</comment>
<comment type="pathway">
    <text evidence="4">Secondary metabolite biosynthesis.</text>
</comment>
<comment type="similarity">
    <text evidence="6">Belongs to the FAD-dependent oxidoreductase family.</text>
</comment>
<protein>
    <recommendedName>
        <fullName evidence="5">Oxidoreductase phnG</fullName>
        <ecNumber evidence="7">1.-.-.-</ecNumber>
    </recommendedName>
    <alternativeName>
        <fullName evidence="5">Phenalenone biosynthesis cluster protein G</fullName>
    </alternativeName>
</protein>
<proteinExistence type="evidence at protein level"/>